<keyword id="KW-0143">Chaperone</keyword>
<keyword id="KW-0963">Cytoplasm</keyword>
<keyword id="KW-0342">GTP-binding</keyword>
<keyword id="KW-0996">Nickel insertion</keyword>
<keyword id="KW-0547">Nucleotide-binding</keyword>
<protein>
    <recommendedName>
        <fullName evidence="1">Urease accessory protein UreG</fullName>
    </recommendedName>
</protein>
<organism>
    <name type="scientific">Burkholderia vietnamiensis (strain G4 / LMG 22486)</name>
    <name type="common">Burkholderia cepacia (strain R1808)</name>
    <dbReference type="NCBI Taxonomy" id="269482"/>
    <lineage>
        <taxon>Bacteria</taxon>
        <taxon>Pseudomonadati</taxon>
        <taxon>Pseudomonadota</taxon>
        <taxon>Betaproteobacteria</taxon>
        <taxon>Burkholderiales</taxon>
        <taxon>Burkholderiaceae</taxon>
        <taxon>Burkholderia</taxon>
        <taxon>Burkholderia cepacia complex</taxon>
    </lineage>
</organism>
<dbReference type="EMBL" id="CP000614">
    <property type="protein sequence ID" value="ABO53842.1"/>
    <property type="molecule type" value="Genomic_DNA"/>
</dbReference>
<dbReference type="SMR" id="A4JC39"/>
<dbReference type="KEGG" id="bvi:Bcep1808_0830"/>
<dbReference type="eggNOG" id="COG0378">
    <property type="taxonomic scope" value="Bacteria"/>
</dbReference>
<dbReference type="HOGENOM" id="CLU_072144_1_0_4"/>
<dbReference type="Proteomes" id="UP000002287">
    <property type="component" value="Chromosome 1"/>
</dbReference>
<dbReference type="GO" id="GO:0005737">
    <property type="term" value="C:cytoplasm"/>
    <property type="evidence" value="ECO:0007669"/>
    <property type="project" value="UniProtKB-SubCell"/>
</dbReference>
<dbReference type="GO" id="GO:0005525">
    <property type="term" value="F:GTP binding"/>
    <property type="evidence" value="ECO:0007669"/>
    <property type="project" value="UniProtKB-KW"/>
</dbReference>
<dbReference type="GO" id="GO:0003924">
    <property type="term" value="F:GTPase activity"/>
    <property type="evidence" value="ECO:0007669"/>
    <property type="project" value="InterPro"/>
</dbReference>
<dbReference type="GO" id="GO:0016151">
    <property type="term" value="F:nickel cation binding"/>
    <property type="evidence" value="ECO:0007669"/>
    <property type="project" value="UniProtKB-UniRule"/>
</dbReference>
<dbReference type="GO" id="GO:0043419">
    <property type="term" value="P:urea catabolic process"/>
    <property type="evidence" value="ECO:0007669"/>
    <property type="project" value="InterPro"/>
</dbReference>
<dbReference type="CDD" id="cd05540">
    <property type="entry name" value="UreG"/>
    <property type="match status" value="1"/>
</dbReference>
<dbReference type="FunFam" id="3.40.50.300:FF:000208">
    <property type="entry name" value="Urease accessory protein UreG"/>
    <property type="match status" value="1"/>
</dbReference>
<dbReference type="Gene3D" id="3.40.50.300">
    <property type="entry name" value="P-loop containing nucleotide triphosphate hydrolases"/>
    <property type="match status" value="1"/>
</dbReference>
<dbReference type="HAMAP" id="MF_01389">
    <property type="entry name" value="UreG"/>
    <property type="match status" value="1"/>
</dbReference>
<dbReference type="InterPro" id="IPR003495">
    <property type="entry name" value="CobW/HypB/UreG_nucleotide-bd"/>
</dbReference>
<dbReference type="InterPro" id="IPR027417">
    <property type="entry name" value="P-loop_NTPase"/>
</dbReference>
<dbReference type="InterPro" id="IPR004400">
    <property type="entry name" value="UreG"/>
</dbReference>
<dbReference type="NCBIfam" id="TIGR00101">
    <property type="entry name" value="ureG"/>
    <property type="match status" value="1"/>
</dbReference>
<dbReference type="PANTHER" id="PTHR31715">
    <property type="entry name" value="UREASE ACCESSORY PROTEIN G"/>
    <property type="match status" value="1"/>
</dbReference>
<dbReference type="PANTHER" id="PTHR31715:SF0">
    <property type="entry name" value="UREASE ACCESSORY PROTEIN G"/>
    <property type="match status" value="1"/>
</dbReference>
<dbReference type="Pfam" id="PF02492">
    <property type="entry name" value="cobW"/>
    <property type="match status" value="1"/>
</dbReference>
<dbReference type="PIRSF" id="PIRSF005624">
    <property type="entry name" value="Ni-bind_GTPase"/>
    <property type="match status" value="1"/>
</dbReference>
<dbReference type="SUPFAM" id="SSF52540">
    <property type="entry name" value="P-loop containing nucleoside triphosphate hydrolases"/>
    <property type="match status" value="1"/>
</dbReference>
<comment type="function">
    <text evidence="1">Facilitates the functional incorporation of the urease nickel metallocenter. This process requires GTP hydrolysis, probably effectuated by UreG.</text>
</comment>
<comment type="subunit">
    <text evidence="1">Homodimer. UreD, UreF and UreG form a complex that acts as a GTP-hydrolysis-dependent molecular chaperone, activating the urease apoprotein by helping to assemble the nickel containing metallocenter of UreC. The UreE protein probably delivers the nickel.</text>
</comment>
<comment type="subcellular location">
    <subcellularLocation>
        <location evidence="1">Cytoplasm</location>
    </subcellularLocation>
</comment>
<comment type="similarity">
    <text evidence="1">Belongs to the SIMIBI class G3E GTPase family. UreG subfamily.</text>
</comment>
<proteinExistence type="inferred from homology"/>
<reference key="1">
    <citation type="submission" date="2007-03" db="EMBL/GenBank/DDBJ databases">
        <title>Complete sequence of chromosome 1 of Burkholderia vietnamiensis G4.</title>
        <authorList>
            <consortium name="US DOE Joint Genome Institute"/>
            <person name="Copeland A."/>
            <person name="Lucas S."/>
            <person name="Lapidus A."/>
            <person name="Barry K."/>
            <person name="Detter J.C."/>
            <person name="Glavina del Rio T."/>
            <person name="Hammon N."/>
            <person name="Israni S."/>
            <person name="Dalin E."/>
            <person name="Tice H."/>
            <person name="Pitluck S."/>
            <person name="Chain P."/>
            <person name="Malfatti S."/>
            <person name="Shin M."/>
            <person name="Vergez L."/>
            <person name="Schmutz J."/>
            <person name="Larimer F."/>
            <person name="Land M."/>
            <person name="Hauser L."/>
            <person name="Kyrpides N."/>
            <person name="Tiedje J."/>
            <person name="Richardson P."/>
        </authorList>
    </citation>
    <scope>NUCLEOTIDE SEQUENCE [LARGE SCALE GENOMIC DNA]</scope>
    <source>
        <strain>G4 / LMG 22486</strain>
    </source>
</reference>
<sequence length="215" mass="22954">MNAPASSPARRTKKLPPLRVGIGGPVGSGKTTLLEMLCKAMRDTYDLVAITNDIYTKEDQRLLTVAGALPEERIMGVETGGCPHTAIREDASINLEAVDRMLSRFPDADIVFIESGGDNLAATFSPELSDLTIYVIDVAGGEKIPRKGGPGITKSDLLVINKTDLAPLVGANLDVMASDTKKMRGERPYVMTNLKALDGVADVIAFIEKKGLLTV</sequence>
<accession>A4JC39</accession>
<feature type="chain" id="PRO_0000347381" description="Urease accessory protein UreG">
    <location>
        <begin position="1"/>
        <end position="215"/>
    </location>
</feature>
<feature type="region of interest" description="Disordered" evidence="2">
    <location>
        <begin position="1"/>
        <end position="21"/>
    </location>
</feature>
<feature type="binding site" evidence="1">
    <location>
        <begin position="24"/>
        <end position="31"/>
    </location>
    <ligand>
        <name>GTP</name>
        <dbReference type="ChEBI" id="CHEBI:37565"/>
    </ligand>
</feature>
<name>UREG_BURVG</name>
<evidence type="ECO:0000255" key="1">
    <source>
        <dbReference type="HAMAP-Rule" id="MF_01389"/>
    </source>
</evidence>
<evidence type="ECO:0000256" key="2">
    <source>
        <dbReference type="SAM" id="MobiDB-lite"/>
    </source>
</evidence>
<gene>
    <name evidence="1" type="primary">ureG</name>
    <name type="ordered locus">Bcep1808_0830</name>
</gene>